<sequence length="509" mass="54916">MDIRAAEISAILKEQIKNFGKEAEVSEVGQVLSVGDGIARVYGLDNVQAGEMVEFPGGIRGMALNLESDNVGVVIFGADRDIKEGDVVKRTGAIVDVPVGPELLGRVVDALGNPIDGKGPIKAKERRRVDVKAPGIIPRKSVHEPMSTGLKAIDALIPVGRGQRELVIGDRQTGKTAIILDTFLNQKPIHDNGPDKDKLYCVYVAVGQKRSTVAQFVKVLEERGALEYSIVVAATASDPAPMQYLAPFAGCAMGEYFRDNGQHALIGYDDLSKQAVAYRQMSLLLRRPPGREAYPGDVFYLHSRLLERAAKLNDENGAGSLTALPVIETQGNDVSAFIPTNVISITDGQIFLETNLFYQGIRPAVNVGLSVSRVGSSAQIKAMKQVAGSIKGELAQHREMAAFAQFGSDLDAATQRLLNRGARLTELLKQPQFSPLKTEEQVAVIYAGVNGYLDKLAVNQVGKFEEGLLASLRTEHKDVLEGIRNEKALTDDLKAKLKAAIDAFAKSFA</sequence>
<dbReference type="EC" id="7.1.2.2" evidence="1"/>
<dbReference type="EMBL" id="AE014291">
    <property type="protein sequence ID" value="AAN30696.1"/>
    <property type="molecule type" value="Genomic_DNA"/>
</dbReference>
<dbReference type="EMBL" id="CP002997">
    <property type="protein sequence ID" value="AEM19113.1"/>
    <property type="molecule type" value="Genomic_DNA"/>
</dbReference>
<dbReference type="RefSeq" id="WP_006192551.1">
    <property type="nucleotide sequence ID" value="NZ_KN046804.1"/>
</dbReference>
<dbReference type="SMR" id="Q8FYR3"/>
<dbReference type="GeneID" id="45052757"/>
<dbReference type="KEGG" id="bms:BR1801"/>
<dbReference type="KEGG" id="bsi:BS1330_I1795"/>
<dbReference type="PATRIC" id="fig|204722.21.peg.1182"/>
<dbReference type="HOGENOM" id="CLU_010091_2_1_5"/>
<dbReference type="PhylomeDB" id="Q8FYR3"/>
<dbReference type="Proteomes" id="UP000007104">
    <property type="component" value="Chromosome I"/>
</dbReference>
<dbReference type="GO" id="GO:0005886">
    <property type="term" value="C:plasma membrane"/>
    <property type="evidence" value="ECO:0007669"/>
    <property type="project" value="UniProtKB-SubCell"/>
</dbReference>
<dbReference type="GO" id="GO:0045259">
    <property type="term" value="C:proton-transporting ATP synthase complex"/>
    <property type="evidence" value="ECO:0007669"/>
    <property type="project" value="UniProtKB-KW"/>
</dbReference>
<dbReference type="GO" id="GO:0043531">
    <property type="term" value="F:ADP binding"/>
    <property type="evidence" value="ECO:0007669"/>
    <property type="project" value="TreeGrafter"/>
</dbReference>
<dbReference type="GO" id="GO:0005524">
    <property type="term" value="F:ATP binding"/>
    <property type="evidence" value="ECO:0007669"/>
    <property type="project" value="UniProtKB-UniRule"/>
</dbReference>
<dbReference type="GO" id="GO:0046933">
    <property type="term" value="F:proton-transporting ATP synthase activity, rotational mechanism"/>
    <property type="evidence" value="ECO:0007669"/>
    <property type="project" value="UniProtKB-UniRule"/>
</dbReference>
<dbReference type="CDD" id="cd18113">
    <property type="entry name" value="ATP-synt_F1_alpha_C"/>
    <property type="match status" value="1"/>
</dbReference>
<dbReference type="CDD" id="cd18116">
    <property type="entry name" value="ATP-synt_F1_alpha_N"/>
    <property type="match status" value="1"/>
</dbReference>
<dbReference type="CDD" id="cd01132">
    <property type="entry name" value="F1-ATPase_alpha_CD"/>
    <property type="match status" value="1"/>
</dbReference>
<dbReference type="FunFam" id="1.20.150.20:FF:000001">
    <property type="entry name" value="ATP synthase subunit alpha"/>
    <property type="match status" value="1"/>
</dbReference>
<dbReference type="FunFam" id="2.40.30.20:FF:000001">
    <property type="entry name" value="ATP synthase subunit alpha"/>
    <property type="match status" value="1"/>
</dbReference>
<dbReference type="FunFam" id="3.40.50.300:FF:002432">
    <property type="entry name" value="ATP synthase subunit alpha, mitochondrial"/>
    <property type="match status" value="1"/>
</dbReference>
<dbReference type="Gene3D" id="2.40.30.20">
    <property type="match status" value="1"/>
</dbReference>
<dbReference type="Gene3D" id="1.20.150.20">
    <property type="entry name" value="ATP synthase alpha/beta chain, C-terminal domain"/>
    <property type="match status" value="1"/>
</dbReference>
<dbReference type="Gene3D" id="3.40.50.300">
    <property type="entry name" value="P-loop containing nucleotide triphosphate hydrolases"/>
    <property type="match status" value="1"/>
</dbReference>
<dbReference type="HAMAP" id="MF_01346">
    <property type="entry name" value="ATP_synth_alpha_bact"/>
    <property type="match status" value="1"/>
</dbReference>
<dbReference type="InterPro" id="IPR023366">
    <property type="entry name" value="ATP_synth_asu-like_sf"/>
</dbReference>
<dbReference type="InterPro" id="IPR000793">
    <property type="entry name" value="ATP_synth_asu_C"/>
</dbReference>
<dbReference type="InterPro" id="IPR038376">
    <property type="entry name" value="ATP_synth_asu_C_sf"/>
</dbReference>
<dbReference type="InterPro" id="IPR033732">
    <property type="entry name" value="ATP_synth_F1_a_nt-bd_dom"/>
</dbReference>
<dbReference type="InterPro" id="IPR005294">
    <property type="entry name" value="ATP_synth_F1_asu"/>
</dbReference>
<dbReference type="InterPro" id="IPR020003">
    <property type="entry name" value="ATPase_a/bsu_AS"/>
</dbReference>
<dbReference type="InterPro" id="IPR004100">
    <property type="entry name" value="ATPase_F1/V1/A1_a/bsu_N"/>
</dbReference>
<dbReference type="InterPro" id="IPR036121">
    <property type="entry name" value="ATPase_F1/V1/A1_a/bsu_N_sf"/>
</dbReference>
<dbReference type="InterPro" id="IPR000194">
    <property type="entry name" value="ATPase_F1/V1/A1_a/bsu_nucl-bd"/>
</dbReference>
<dbReference type="InterPro" id="IPR027417">
    <property type="entry name" value="P-loop_NTPase"/>
</dbReference>
<dbReference type="NCBIfam" id="TIGR00962">
    <property type="entry name" value="atpA"/>
    <property type="match status" value="1"/>
</dbReference>
<dbReference type="NCBIfam" id="NF009884">
    <property type="entry name" value="PRK13343.1"/>
    <property type="match status" value="1"/>
</dbReference>
<dbReference type="PANTHER" id="PTHR48082">
    <property type="entry name" value="ATP SYNTHASE SUBUNIT ALPHA, MITOCHONDRIAL"/>
    <property type="match status" value="1"/>
</dbReference>
<dbReference type="PANTHER" id="PTHR48082:SF2">
    <property type="entry name" value="ATP SYNTHASE SUBUNIT ALPHA, MITOCHONDRIAL"/>
    <property type="match status" value="1"/>
</dbReference>
<dbReference type="Pfam" id="PF00006">
    <property type="entry name" value="ATP-synt_ab"/>
    <property type="match status" value="1"/>
</dbReference>
<dbReference type="Pfam" id="PF00306">
    <property type="entry name" value="ATP-synt_ab_C"/>
    <property type="match status" value="1"/>
</dbReference>
<dbReference type="Pfam" id="PF02874">
    <property type="entry name" value="ATP-synt_ab_N"/>
    <property type="match status" value="1"/>
</dbReference>
<dbReference type="PIRSF" id="PIRSF039088">
    <property type="entry name" value="F_ATPase_subunit_alpha"/>
    <property type="match status" value="1"/>
</dbReference>
<dbReference type="SUPFAM" id="SSF47917">
    <property type="entry name" value="C-terminal domain of alpha and beta subunits of F1 ATP synthase"/>
    <property type="match status" value="1"/>
</dbReference>
<dbReference type="SUPFAM" id="SSF50615">
    <property type="entry name" value="N-terminal domain of alpha and beta subunits of F1 ATP synthase"/>
    <property type="match status" value="1"/>
</dbReference>
<dbReference type="SUPFAM" id="SSF52540">
    <property type="entry name" value="P-loop containing nucleoside triphosphate hydrolases"/>
    <property type="match status" value="1"/>
</dbReference>
<dbReference type="PROSITE" id="PS00152">
    <property type="entry name" value="ATPASE_ALPHA_BETA"/>
    <property type="match status" value="1"/>
</dbReference>
<accession>Q8FYR3</accession>
<accession>G0K7D7</accession>
<proteinExistence type="inferred from homology"/>
<feature type="chain" id="PRO_0000238216" description="ATP synthase subunit alpha">
    <location>
        <begin position="1"/>
        <end position="509"/>
    </location>
</feature>
<feature type="binding site" evidence="1">
    <location>
        <begin position="169"/>
        <end position="176"/>
    </location>
    <ligand>
        <name>ATP</name>
        <dbReference type="ChEBI" id="CHEBI:30616"/>
    </ligand>
</feature>
<feature type="site" description="Required for activity" evidence="1">
    <location>
        <position position="370"/>
    </location>
</feature>
<protein>
    <recommendedName>
        <fullName evidence="1">ATP synthase subunit alpha</fullName>
        <ecNumber evidence="1">7.1.2.2</ecNumber>
    </recommendedName>
    <alternativeName>
        <fullName evidence="1">ATP synthase F1 sector subunit alpha</fullName>
    </alternativeName>
    <alternativeName>
        <fullName evidence="1">F-ATPase subunit alpha</fullName>
    </alternativeName>
</protein>
<comment type="function">
    <text evidence="1">Produces ATP from ADP in the presence of a proton gradient across the membrane. The alpha chain is a regulatory subunit.</text>
</comment>
<comment type="catalytic activity">
    <reaction evidence="1">
        <text>ATP + H2O + 4 H(+)(in) = ADP + phosphate + 5 H(+)(out)</text>
        <dbReference type="Rhea" id="RHEA:57720"/>
        <dbReference type="ChEBI" id="CHEBI:15377"/>
        <dbReference type="ChEBI" id="CHEBI:15378"/>
        <dbReference type="ChEBI" id="CHEBI:30616"/>
        <dbReference type="ChEBI" id="CHEBI:43474"/>
        <dbReference type="ChEBI" id="CHEBI:456216"/>
        <dbReference type="EC" id="7.1.2.2"/>
    </reaction>
</comment>
<comment type="subunit">
    <text evidence="1">F-type ATPases have 2 components, CF(1) - the catalytic core - and CF(0) - the membrane proton channel. CF(1) has five subunits: alpha(3), beta(3), gamma(1), delta(1), epsilon(1). CF(0) has three main subunits: a(1), b(2) and c(9-12). The alpha and beta chains form an alternating ring which encloses part of the gamma chain. CF(1) is attached to CF(0) by a central stalk formed by the gamma and epsilon chains, while a peripheral stalk is formed by the delta and b chains.</text>
</comment>
<comment type="subcellular location">
    <subcellularLocation>
        <location evidence="1">Cell inner membrane</location>
        <topology evidence="1">Peripheral membrane protein</topology>
    </subcellularLocation>
</comment>
<comment type="similarity">
    <text evidence="1">Belongs to the ATPase alpha/beta chains family.</text>
</comment>
<organism>
    <name type="scientific">Brucella suis biovar 1 (strain 1330)</name>
    <dbReference type="NCBI Taxonomy" id="204722"/>
    <lineage>
        <taxon>Bacteria</taxon>
        <taxon>Pseudomonadati</taxon>
        <taxon>Pseudomonadota</taxon>
        <taxon>Alphaproteobacteria</taxon>
        <taxon>Hyphomicrobiales</taxon>
        <taxon>Brucellaceae</taxon>
        <taxon>Brucella/Ochrobactrum group</taxon>
        <taxon>Brucella</taxon>
    </lineage>
</organism>
<keyword id="KW-0066">ATP synthesis</keyword>
<keyword id="KW-0067">ATP-binding</keyword>
<keyword id="KW-0997">Cell inner membrane</keyword>
<keyword id="KW-1003">Cell membrane</keyword>
<keyword id="KW-0139">CF(1)</keyword>
<keyword id="KW-0375">Hydrogen ion transport</keyword>
<keyword id="KW-0406">Ion transport</keyword>
<keyword id="KW-0472">Membrane</keyword>
<keyword id="KW-0547">Nucleotide-binding</keyword>
<keyword id="KW-1278">Translocase</keyword>
<keyword id="KW-0813">Transport</keyword>
<gene>
    <name evidence="1" type="primary">atpA</name>
    <name type="ordered locus">BR1801</name>
    <name type="ordered locus">BS1330_I1795</name>
</gene>
<evidence type="ECO:0000255" key="1">
    <source>
        <dbReference type="HAMAP-Rule" id="MF_01346"/>
    </source>
</evidence>
<reference key="1">
    <citation type="journal article" date="2002" name="Proc. Natl. Acad. Sci. U.S.A.">
        <title>The Brucella suis genome reveals fundamental similarities between animal and plant pathogens and symbionts.</title>
        <authorList>
            <person name="Paulsen I.T."/>
            <person name="Seshadri R."/>
            <person name="Nelson K.E."/>
            <person name="Eisen J.A."/>
            <person name="Heidelberg J.F."/>
            <person name="Read T.D."/>
            <person name="Dodson R.J."/>
            <person name="Umayam L.A."/>
            <person name="Brinkac L.M."/>
            <person name="Beanan M.J."/>
            <person name="Daugherty S.C."/>
            <person name="DeBoy R.T."/>
            <person name="Durkin A.S."/>
            <person name="Kolonay J.F."/>
            <person name="Madupu R."/>
            <person name="Nelson W.C."/>
            <person name="Ayodeji B."/>
            <person name="Kraul M."/>
            <person name="Shetty J."/>
            <person name="Malek J.A."/>
            <person name="Van Aken S.E."/>
            <person name="Riedmuller S."/>
            <person name="Tettelin H."/>
            <person name="Gill S.R."/>
            <person name="White O."/>
            <person name="Salzberg S.L."/>
            <person name="Hoover D.L."/>
            <person name="Lindler L.E."/>
            <person name="Halling S.M."/>
            <person name="Boyle S.M."/>
            <person name="Fraser C.M."/>
        </authorList>
    </citation>
    <scope>NUCLEOTIDE SEQUENCE [LARGE SCALE GENOMIC DNA]</scope>
    <source>
        <strain>1330</strain>
    </source>
</reference>
<reference key="2">
    <citation type="journal article" date="2011" name="J. Bacteriol.">
        <title>Revised genome sequence of Brucella suis 1330.</title>
        <authorList>
            <person name="Tae H."/>
            <person name="Shallom S."/>
            <person name="Settlage R."/>
            <person name="Preston D."/>
            <person name="Adams L.G."/>
            <person name="Garner H.R."/>
        </authorList>
    </citation>
    <scope>NUCLEOTIDE SEQUENCE [LARGE SCALE GENOMIC DNA]</scope>
    <source>
        <strain>1330</strain>
    </source>
</reference>
<name>ATPA_BRUSU</name>